<organism>
    <name type="scientific">Shewanella woodyi (strain ATCC 51908 / MS32)</name>
    <dbReference type="NCBI Taxonomy" id="392500"/>
    <lineage>
        <taxon>Bacteria</taxon>
        <taxon>Pseudomonadati</taxon>
        <taxon>Pseudomonadota</taxon>
        <taxon>Gammaproteobacteria</taxon>
        <taxon>Alteromonadales</taxon>
        <taxon>Shewanellaceae</taxon>
        <taxon>Shewanella</taxon>
    </lineage>
</organism>
<keyword id="KW-1185">Reference proteome</keyword>
<evidence type="ECO:0000255" key="1">
    <source>
        <dbReference type="HAMAP-Rule" id="MF_00302"/>
    </source>
</evidence>
<dbReference type="EMBL" id="CP000961">
    <property type="protein sequence ID" value="ACA86976.1"/>
    <property type="molecule type" value="Genomic_DNA"/>
</dbReference>
<dbReference type="RefSeq" id="WP_012325314.1">
    <property type="nucleotide sequence ID" value="NC_010506.1"/>
</dbReference>
<dbReference type="SMR" id="B1KIC5"/>
<dbReference type="STRING" id="392500.Swoo_2700"/>
<dbReference type="KEGG" id="swd:Swoo_2700"/>
<dbReference type="eggNOG" id="COG2127">
    <property type="taxonomic scope" value="Bacteria"/>
</dbReference>
<dbReference type="HOGENOM" id="CLU_134358_2_1_6"/>
<dbReference type="Proteomes" id="UP000002168">
    <property type="component" value="Chromosome"/>
</dbReference>
<dbReference type="GO" id="GO:0030163">
    <property type="term" value="P:protein catabolic process"/>
    <property type="evidence" value="ECO:0007669"/>
    <property type="project" value="InterPro"/>
</dbReference>
<dbReference type="GO" id="GO:0006508">
    <property type="term" value="P:proteolysis"/>
    <property type="evidence" value="ECO:0007669"/>
    <property type="project" value="UniProtKB-UniRule"/>
</dbReference>
<dbReference type="FunFam" id="3.30.1390.10:FF:000002">
    <property type="entry name" value="ATP-dependent Clp protease adapter protein ClpS"/>
    <property type="match status" value="1"/>
</dbReference>
<dbReference type="Gene3D" id="3.30.1390.10">
    <property type="match status" value="1"/>
</dbReference>
<dbReference type="HAMAP" id="MF_00302">
    <property type="entry name" value="ClpS"/>
    <property type="match status" value="1"/>
</dbReference>
<dbReference type="InterPro" id="IPR022935">
    <property type="entry name" value="ClpS"/>
</dbReference>
<dbReference type="InterPro" id="IPR003769">
    <property type="entry name" value="ClpS_core"/>
</dbReference>
<dbReference type="InterPro" id="IPR014719">
    <property type="entry name" value="Ribosomal_bL12_C/ClpS-like"/>
</dbReference>
<dbReference type="NCBIfam" id="NF000670">
    <property type="entry name" value="PRK00033.1-3"/>
    <property type="match status" value="1"/>
</dbReference>
<dbReference type="NCBIfam" id="NF000672">
    <property type="entry name" value="PRK00033.1-5"/>
    <property type="match status" value="1"/>
</dbReference>
<dbReference type="PANTHER" id="PTHR33473:SF19">
    <property type="entry name" value="ATP-DEPENDENT CLP PROTEASE ADAPTER PROTEIN CLPS"/>
    <property type="match status" value="1"/>
</dbReference>
<dbReference type="PANTHER" id="PTHR33473">
    <property type="entry name" value="ATP-DEPENDENT CLP PROTEASE ADAPTER PROTEIN CLPS1, CHLOROPLASTIC"/>
    <property type="match status" value="1"/>
</dbReference>
<dbReference type="Pfam" id="PF02617">
    <property type="entry name" value="ClpS"/>
    <property type="match status" value="1"/>
</dbReference>
<dbReference type="SUPFAM" id="SSF54736">
    <property type="entry name" value="ClpS-like"/>
    <property type="match status" value="1"/>
</dbReference>
<gene>
    <name evidence="1" type="primary">clpS</name>
    <name type="ordered locus">Swoo_2700</name>
</gene>
<name>CLPS_SHEWM</name>
<proteinExistence type="inferred from homology"/>
<comment type="function">
    <text evidence="1">Involved in the modulation of the specificity of the ClpAP-mediated ATP-dependent protein degradation.</text>
</comment>
<comment type="subunit">
    <text evidence="1">Binds to the N-terminal domain of the chaperone ClpA.</text>
</comment>
<comment type="similarity">
    <text evidence="1">Belongs to the ClpS family.</text>
</comment>
<sequence>MGKAGNIEHVEERVESEVMPPSMYKVILNNDDYTPMDFVIEVLQLFFKKTEEQATDIMLAIHHQGKGICGIFPFGIAETKVAQVNQFARQNQHPLLCSLEKA</sequence>
<reference key="1">
    <citation type="submission" date="2008-02" db="EMBL/GenBank/DDBJ databases">
        <title>Complete sequence of Shewanella woodyi ATCC 51908.</title>
        <authorList>
            <consortium name="US DOE Joint Genome Institute"/>
            <person name="Copeland A."/>
            <person name="Lucas S."/>
            <person name="Lapidus A."/>
            <person name="Glavina del Rio T."/>
            <person name="Dalin E."/>
            <person name="Tice H."/>
            <person name="Bruce D."/>
            <person name="Goodwin L."/>
            <person name="Pitluck S."/>
            <person name="Sims D."/>
            <person name="Brettin T."/>
            <person name="Detter J.C."/>
            <person name="Han C."/>
            <person name="Kuske C.R."/>
            <person name="Schmutz J."/>
            <person name="Larimer F."/>
            <person name="Land M."/>
            <person name="Hauser L."/>
            <person name="Kyrpides N."/>
            <person name="Lykidis A."/>
            <person name="Zhao J.-S."/>
            <person name="Richardson P."/>
        </authorList>
    </citation>
    <scope>NUCLEOTIDE SEQUENCE [LARGE SCALE GENOMIC DNA]</scope>
    <source>
        <strain>ATCC 51908 / MS32</strain>
    </source>
</reference>
<feature type="chain" id="PRO_1000115477" description="ATP-dependent Clp protease adapter protein ClpS">
    <location>
        <begin position="1"/>
        <end position="102"/>
    </location>
</feature>
<accession>B1KIC5</accession>
<protein>
    <recommendedName>
        <fullName evidence="1">ATP-dependent Clp protease adapter protein ClpS</fullName>
    </recommendedName>
</protein>